<gene>
    <name type="primary">yjdP</name>
    <name type="ordered locus">SDY_4125</name>
</gene>
<sequence>MKPYSTLFLFTLLTLTTVPAQADIIDDTIGNIQQAINDAYNPDHGRDYEDSRDDGWQREVSDDRRRQYDDRRRQFEDRRRQLDDRQHQLDQERRQLEDEERRMEDEYGQ</sequence>
<evidence type="ECO:0000255" key="1"/>
<evidence type="ECO:0000256" key="2">
    <source>
        <dbReference type="SAM" id="MobiDB-lite"/>
    </source>
</evidence>
<name>YJDP_SHIDS</name>
<keyword id="KW-1185">Reference proteome</keyword>
<keyword id="KW-0732">Signal</keyword>
<accession>Q329H0</accession>
<proteinExistence type="inferred from homology"/>
<reference key="1">
    <citation type="journal article" date="2005" name="Nucleic Acids Res.">
        <title>Genome dynamics and diversity of Shigella species, the etiologic agents of bacillary dysentery.</title>
        <authorList>
            <person name="Yang F."/>
            <person name="Yang J."/>
            <person name="Zhang X."/>
            <person name="Chen L."/>
            <person name="Jiang Y."/>
            <person name="Yan Y."/>
            <person name="Tang X."/>
            <person name="Wang J."/>
            <person name="Xiong Z."/>
            <person name="Dong J."/>
            <person name="Xue Y."/>
            <person name="Zhu Y."/>
            <person name="Xu X."/>
            <person name="Sun L."/>
            <person name="Chen S."/>
            <person name="Nie H."/>
            <person name="Peng J."/>
            <person name="Xu J."/>
            <person name="Wang Y."/>
            <person name="Yuan Z."/>
            <person name="Wen Y."/>
            <person name="Yao Z."/>
            <person name="Shen Y."/>
            <person name="Qiang B."/>
            <person name="Hou Y."/>
            <person name="Yu J."/>
            <person name="Jin Q."/>
        </authorList>
    </citation>
    <scope>NUCLEOTIDE SEQUENCE [LARGE SCALE GENOMIC DNA]</scope>
    <source>
        <strain>Sd197</strain>
    </source>
</reference>
<feature type="signal peptide" evidence="1">
    <location>
        <begin position="1"/>
        <end position="22"/>
    </location>
</feature>
<feature type="chain" id="PRO_0000228852" description="Uncharacterized protein YjdP">
    <location>
        <begin position="23"/>
        <end position="109"/>
    </location>
</feature>
<feature type="region of interest" description="Disordered" evidence="2">
    <location>
        <begin position="39"/>
        <end position="109"/>
    </location>
</feature>
<feature type="compositionally biased region" description="Basic and acidic residues" evidence="2">
    <location>
        <begin position="41"/>
        <end position="109"/>
    </location>
</feature>
<organism>
    <name type="scientific">Shigella dysenteriae serotype 1 (strain Sd197)</name>
    <dbReference type="NCBI Taxonomy" id="300267"/>
    <lineage>
        <taxon>Bacteria</taxon>
        <taxon>Pseudomonadati</taxon>
        <taxon>Pseudomonadota</taxon>
        <taxon>Gammaproteobacteria</taxon>
        <taxon>Enterobacterales</taxon>
        <taxon>Enterobacteriaceae</taxon>
        <taxon>Shigella</taxon>
    </lineage>
</organism>
<dbReference type="EMBL" id="CP000034">
    <property type="protein sequence ID" value="ABB64035.1"/>
    <property type="molecule type" value="Genomic_DNA"/>
</dbReference>
<dbReference type="RefSeq" id="WP_000806199.1">
    <property type="nucleotide sequence ID" value="NC_007606.1"/>
</dbReference>
<dbReference type="RefSeq" id="YP_405526.1">
    <property type="nucleotide sequence ID" value="NC_007606.1"/>
</dbReference>
<dbReference type="SMR" id="Q329H0"/>
<dbReference type="STRING" id="300267.SDY_4125"/>
<dbReference type="EnsemblBacteria" id="ABB64035">
    <property type="protein sequence ID" value="ABB64035"/>
    <property type="gene ID" value="SDY_4125"/>
</dbReference>
<dbReference type="KEGG" id="sdy:SDY_4125"/>
<dbReference type="PATRIC" id="fig|300267.13.peg.4849"/>
<dbReference type="HOGENOM" id="CLU_176118_0_0_6"/>
<dbReference type="Proteomes" id="UP000002716">
    <property type="component" value="Chromosome"/>
</dbReference>
<dbReference type="InterPro" id="IPR048164">
    <property type="entry name" value="YjdP-like"/>
</dbReference>
<dbReference type="NCBIfam" id="NF041443">
    <property type="entry name" value="DDRRRQL_YjdP"/>
    <property type="match status" value="1"/>
</dbReference>
<protein>
    <recommendedName>
        <fullName>Uncharacterized protein YjdP</fullName>
    </recommendedName>
</protein>